<dbReference type="EC" id="3.6.1.7"/>
<dbReference type="EMBL" id="CP000240">
    <property type="protein sequence ID" value="ABD01694.1"/>
    <property type="molecule type" value="Genomic_DNA"/>
</dbReference>
<dbReference type="RefSeq" id="WP_011432352.1">
    <property type="nucleotide sequence ID" value="NC_007776.1"/>
</dbReference>
<dbReference type="SMR" id="Q2JNH2"/>
<dbReference type="STRING" id="321332.CYB_0710"/>
<dbReference type="KEGG" id="cyb:CYB_0710"/>
<dbReference type="eggNOG" id="COG1254">
    <property type="taxonomic scope" value="Bacteria"/>
</dbReference>
<dbReference type="HOGENOM" id="CLU_141932_3_2_3"/>
<dbReference type="OrthoDB" id="9808093at2"/>
<dbReference type="Proteomes" id="UP000001938">
    <property type="component" value="Chromosome"/>
</dbReference>
<dbReference type="GO" id="GO:0003998">
    <property type="term" value="F:acylphosphatase activity"/>
    <property type="evidence" value="ECO:0007669"/>
    <property type="project" value="UniProtKB-EC"/>
</dbReference>
<dbReference type="Gene3D" id="3.30.70.100">
    <property type="match status" value="1"/>
</dbReference>
<dbReference type="InterPro" id="IPR020456">
    <property type="entry name" value="Acylphosphatase"/>
</dbReference>
<dbReference type="InterPro" id="IPR001792">
    <property type="entry name" value="Acylphosphatase-like_dom"/>
</dbReference>
<dbReference type="InterPro" id="IPR036046">
    <property type="entry name" value="Acylphosphatase-like_dom_sf"/>
</dbReference>
<dbReference type="InterPro" id="IPR017968">
    <property type="entry name" value="Acylphosphatase_CS"/>
</dbReference>
<dbReference type="PANTHER" id="PTHR47268">
    <property type="entry name" value="ACYLPHOSPHATASE"/>
    <property type="match status" value="1"/>
</dbReference>
<dbReference type="PANTHER" id="PTHR47268:SF4">
    <property type="entry name" value="ACYLPHOSPHATASE"/>
    <property type="match status" value="1"/>
</dbReference>
<dbReference type="Pfam" id="PF00708">
    <property type="entry name" value="Acylphosphatase"/>
    <property type="match status" value="1"/>
</dbReference>
<dbReference type="SUPFAM" id="SSF54975">
    <property type="entry name" value="Acylphosphatase/BLUF domain-like"/>
    <property type="match status" value="1"/>
</dbReference>
<dbReference type="PROSITE" id="PS00150">
    <property type="entry name" value="ACYLPHOSPHATASE_1"/>
    <property type="match status" value="1"/>
</dbReference>
<dbReference type="PROSITE" id="PS00151">
    <property type="entry name" value="ACYLPHOSPHATASE_2"/>
    <property type="match status" value="1"/>
</dbReference>
<dbReference type="PROSITE" id="PS51160">
    <property type="entry name" value="ACYLPHOSPHATASE_3"/>
    <property type="match status" value="1"/>
</dbReference>
<keyword id="KW-0378">Hydrolase</keyword>
<keyword id="KW-1185">Reference proteome</keyword>
<comment type="catalytic activity">
    <reaction>
        <text>an acyl phosphate + H2O = a carboxylate + phosphate + H(+)</text>
        <dbReference type="Rhea" id="RHEA:14965"/>
        <dbReference type="ChEBI" id="CHEBI:15377"/>
        <dbReference type="ChEBI" id="CHEBI:15378"/>
        <dbReference type="ChEBI" id="CHEBI:29067"/>
        <dbReference type="ChEBI" id="CHEBI:43474"/>
        <dbReference type="ChEBI" id="CHEBI:59918"/>
        <dbReference type="EC" id="3.6.1.7"/>
    </reaction>
</comment>
<comment type="similarity">
    <text evidence="2">Belongs to the acylphosphatase family.</text>
</comment>
<name>ACYP_SYNJB</name>
<sequence length="94" mass="10404">MSDRVRVHVWIRGRVQGVGFRAHTEAMALHAGVQGWVRNLRDGRVEAVFEGSPAAVEAMLRWCQQGSPGSVVEAIEQRSEPPEGLPTFEIRPTV</sequence>
<proteinExistence type="inferred from homology"/>
<reference key="1">
    <citation type="journal article" date="2007" name="ISME J.">
        <title>Population level functional diversity in a microbial community revealed by comparative genomic and metagenomic analyses.</title>
        <authorList>
            <person name="Bhaya D."/>
            <person name="Grossman A.R."/>
            <person name="Steunou A.-S."/>
            <person name="Khuri N."/>
            <person name="Cohan F.M."/>
            <person name="Hamamura N."/>
            <person name="Melendrez M.C."/>
            <person name="Bateson M.M."/>
            <person name="Ward D.M."/>
            <person name="Heidelberg J.F."/>
        </authorList>
    </citation>
    <scope>NUCLEOTIDE SEQUENCE [LARGE SCALE GENOMIC DNA]</scope>
    <source>
        <strain>JA-2-3B'a(2-13)</strain>
    </source>
</reference>
<evidence type="ECO:0000255" key="1">
    <source>
        <dbReference type="PROSITE-ProRule" id="PRU00520"/>
    </source>
</evidence>
<evidence type="ECO:0000305" key="2"/>
<accession>Q2JNH2</accession>
<protein>
    <recommendedName>
        <fullName>Acylphosphatase</fullName>
        <ecNumber>3.6.1.7</ecNumber>
    </recommendedName>
    <alternativeName>
        <fullName>Acylphosphate phosphohydrolase</fullName>
    </alternativeName>
</protein>
<organism>
    <name type="scientific">Synechococcus sp. (strain JA-2-3B'a(2-13))</name>
    <name type="common">Cyanobacteria bacterium Yellowstone B-Prime</name>
    <dbReference type="NCBI Taxonomy" id="321332"/>
    <lineage>
        <taxon>Bacteria</taxon>
        <taxon>Bacillati</taxon>
        <taxon>Cyanobacteriota</taxon>
        <taxon>Cyanophyceae</taxon>
        <taxon>Synechococcales</taxon>
        <taxon>Synechococcaceae</taxon>
        <taxon>Synechococcus</taxon>
    </lineage>
</organism>
<feature type="chain" id="PRO_0000326825" description="Acylphosphatase">
    <location>
        <begin position="1"/>
        <end position="94"/>
    </location>
</feature>
<feature type="domain" description="Acylphosphatase-like" evidence="1">
    <location>
        <begin position="6"/>
        <end position="92"/>
    </location>
</feature>
<feature type="active site" evidence="1">
    <location>
        <position position="21"/>
    </location>
</feature>
<feature type="active site" evidence="1">
    <location>
        <position position="39"/>
    </location>
</feature>
<gene>
    <name type="primary">acyP</name>
    <name type="ordered locus">CYB_0710</name>
</gene>